<proteinExistence type="inferred from homology"/>
<evidence type="ECO:0000250" key="1">
    <source>
        <dbReference type="UniProtKB" id="P03928"/>
    </source>
</evidence>
<evidence type="ECO:0000250" key="2">
    <source>
        <dbReference type="UniProtKB" id="P19483"/>
    </source>
</evidence>
<evidence type="ECO:0000255" key="3"/>
<evidence type="ECO:0000305" key="4"/>
<comment type="function">
    <text evidence="1 2">Subunit 8, of the mitochondrial membrane ATP synthase complex (F(1)F(0) ATP synthase or Complex V) that produces ATP from ADP in the presence of a proton gradient across the membrane which is generated by electron transport complexes of the respiratory chain. ATP synthase complex consist of a soluble F(1) head domain - the catalytic core - and a membrane F(1) domain - the membrane proton channel. These two domains are linked by a central stalk rotating inside the F(1) region and a stationary peripheral stalk. During catalysis, ATP synthesis in the catalytic domain of F(1) is coupled via a rotary mechanism of the central stalk subunits to proton translocation (By similarity). In vivo, can only synthesize ATP although its ATP hydrolase activity can be activated artificially in vitro (By similarity). Part of the complex F(0) domain (By similarity).</text>
</comment>
<comment type="subunit">
    <text evidence="1">Component of the ATP synthase complex composed at least of ATP5F1A/subunit alpha, ATP5F1B/subunit beta, ATP5MC1/subunit c (homooctomer), MT-ATP6/subunit a, MT-ATP8/subunit 8, ATP5ME/subunit e, ATP5MF/subunit f, ATP5MG/subunit g, ATP5MK/subunit k, ATP5MJ/subunit j, ATP5F1C/subunit gamma, ATP5F1D/subunit delta, ATP5F1E/subunit epsilon, ATP5PF/subunit F6, ATP5PB/subunit b, ATP5PD/subunit d, ATP5PO/subunit OSCP. ATP synthase complex consists of a soluble F(1) head domain (subunits alpha(3) and beta(3)) - the catalytic core - and a membrane F(0) domain - the membrane proton channel (subunits c, a, 8, e, f, g, k and j). These two domains are linked by a central stalk (subunits gamma, delta, and epsilon) rotating inside the F1 region and a stationary peripheral stalk (subunits F6, b, d, and OSCP).</text>
</comment>
<comment type="subcellular location">
    <subcellularLocation>
        <location>Mitochondrion membrane</location>
        <topology>Single-pass membrane protein</topology>
    </subcellularLocation>
</comment>
<comment type="similarity">
    <text evidence="4">Belongs to the ATPase protein 8 family.</text>
</comment>
<reference key="1">
    <citation type="journal article" date="1997" name="Mol. Biol. Evol.">
        <title>The complete mitochondrial genome of Alligator mississippiensis and the separation between recent archosauria (birds and crocodiles).</title>
        <authorList>
            <person name="Janke A."/>
            <person name="Arnason U."/>
        </authorList>
    </citation>
    <scope>NUCLEOTIDE SEQUENCE [GENOMIC DNA]</scope>
    <source>
        <tissue>Liver</tissue>
    </source>
</reference>
<reference key="2">
    <citation type="journal article" date="1999" name="Syst. Biol.">
        <title>Interordinal relationships of birds and other reptiles based on whole mitochondrial genomes.</title>
        <authorList>
            <person name="Mindell D.P."/>
            <person name="Sorenson M.D."/>
            <person name="Dimcheff D.E."/>
            <person name="Hasegawa M."/>
            <person name="Ast J.C."/>
            <person name="Yuri T."/>
        </authorList>
    </citation>
    <scope>NUCLEOTIDE SEQUENCE [GENOMIC DNA]</scope>
</reference>
<name>ATP8_ALLMI</name>
<gene>
    <name evidence="1" type="primary">MT-ATP8</name>
    <name type="synonym">ATP8</name>
    <name type="synonym">ATPASE8</name>
    <name type="synonym">MTATP8</name>
</gene>
<protein>
    <recommendedName>
        <fullName evidence="1">ATP synthase F(0) complex subunit 8</fullName>
    </recommendedName>
    <alternativeName>
        <fullName>A6L</fullName>
    </alternativeName>
    <alternativeName>
        <fullName>F-ATPase subunit 8</fullName>
    </alternativeName>
</protein>
<sequence length="53" mass="6181">MPQLNPEPWLTTFLIVWISLIVILQPKIASLMLTSSPTPYKAMTIKTWPWPWT</sequence>
<geneLocation type="mitochondrion"/>
<keyword id="KW-0066">ATP synthesis</keyword>
<keyword id="KW-0138">CF(0)</keyword>
<keyword id="KW-0375">Hydrogen ion transport</keyword>
<keyword id="KW-0406">Ion transport</keyword>
<keyword id="KW-0472">Membrane</keyword>
<keyword id="KW-0496">Mitochondrion</keyword>
<keyword id="KW-0812">Transmembrane</keyword>
<keyword id="KW-1133">Transmembrane helix</keyword>
<keyword id="KW-0813">Transport</keyword>
<organism>
    <name type="scientific">Alligator mississippiensis</name>
    <name type="common">American alligator</name>
    <dbReference type="NCBI Taxonomy" id="8496"/>
    <lineage>
        <taxon>Eukaryota</taxon>
        <taxon>Metazoa</taxon>
        <taxon>Chordata</taxon>
        <taxon>Craniata</taxon>
        <taxon>Vertebrata</taxon>
        <taxon>Euteleostomi</taxon>
        <taxon>Archelosauria</taxon>
        <taxon>Archosauria</taxon>
        <taxon>Crocodylia</taxon>
        <taxon>Alligatoridae</taxon>
        <taxon>Alligatorinae</taxon>
        <taxon>Alligator</taxon>
    </lineage>
</organism>
<dbReference type="EMBL" id="Y13113">
    <property type="protein sequence ID" value="CAA73565.1"/>
    <property type="molecule type" value="Genomic_DNA"/>
</dbReference>
<dbReference type="EMBL" id="AF069428">
    <property type="protein sequence ID" value="AAD09984.1"/>
    <property type="molecule type" value="Genomic_DNA"/>
</dbReference>
<dbReference type="PIR" id="T11278">
    <property type="entry name" value="T11278"/>
</dbReference>
<dbReference type="RefSeq" id="NP_007566.1">
    <property type="nucleotide sequence ID" value="NC_001922.1"/>
</dbReference>
<dbReference type="SMR" id="O47871"/>
<dbReference type="GeneID" id="808243"/>
<dbReference type="KEGG" id="amj:808243"/>
<dbReference type="CTD" id="4509"/>
<dbReference type="OrthoDB" id="8734014at2759"/>
<dbReference type="GO" id="GO:0031966">
    <property type="term" value="C:mitochondrial membrane"/>
    <property type="evidence" value="ECO:0007669"/>
    <property type="project" value="UniProtKB-SubCell"/>
</dbReference>
<dbReference type="GO" id="GO:0045259">
    <property type="term" value="C:proton-transporting ATP synthase complex"/>
    <property type="evidence" value="ECO:0007669"/>
    <property type="project" value="UniProtKB-KW"/>
</dbReference>
<dbReference type="GO" id="GO:0015078">
    <property type="term" value="F:proton transmembrane transporter activity"/>
    <property type="evidence" value="ECO:0007669"/>
    <property type="project" value="InterPro"/>
</dbReference>
<dbReference type="GO" id="GO:0015986">
    <property type="term" value="P:proton motive force-driven ATP synthesis"/>
    <property type="evidence" value="ECO:0007669"/>
    <property type="project" value="InterPro"/>
</dbReference>
<dbReference type="InterPro" id="IPR001421">
    <property type="entry name" value="ATP8_metazoa"/>
</dbReference>
<dbReference type="InterPro" id="IPR050635">
    <property type="entry name" value="ATPase_protein_8"/>
</dbReference>
<dbReference type="PANTHER" id="PTHR39937">
    <property type="entry name" value="ATP SYNTHASE PROTEIN 8"/>
    <property type="match status" value="1"/>
</dbReference>
<dbReference type="PANTHER" id="PTHR39937:SF1">
    <property type="entry name" value="ATP SYNTHASE PROTEIN 8"/>
    <property type="match status" value="1"/>
</dbReference>
<dbReference type="Pfam" id="PF00895">
    <property type="entry name" value="ATP-synt_8"/>
    <property type="match status" value="1"/>
</dbReference>
<accession>O47871</accession>
<feature type="chain" id="PRO_0000195480" description="ATP synthase F(0) complex subunit 8">
    <location>
        <begin position="1"/>
        <end position="53"/>
    </location>
</feature>
<feature type="transmembrane region" description="Helical" evidence="3">
    <location>
        <begin position="8"/>
        <end position="24"/>
    </location>
</feature>